<proteinExistence type="inferred from homology"/>
<dbReference type="EC" id="5.1.1.7" evidence="1"/>
<dbReference type="EMBL" id="AE016823">
    <property type="protein sequence ID" value="AAS68711.1"/>
    <property type="molecule type" value="Genomic_DNA"/>
</dbReference>
<dbReference type="RefSeq" id="WP_000157608.1">
    <property type="nucleotide sequence ID" value="NC_005823.1"/>
</dbReference>
<dbReference type="SMR" id="Q72W63"/>
<dbReference type="GeneID" id="61143429"/>
<dbReference type="KEGG" id="lic:LIC_10074"/>
<dbReference type="HOGENOM" id="CLU_053306_3_0_12"/>
<dbReference type="UniPathway" id="UPA00034">
    <property type="reaction ID" value="UER00025"/>
</dbReference>
<dbReference type="Proteomes" id="UP000007037">
    <property type="component" value="Chromosome I"/>
</dbReference>
<dbReference type="GO" id="GO:0005829">
    <property type="term" value="C:cytosol"/>
    <property type="evidence" value="ECO:0007669"/>
    <property type="project" value="TreeGrafter"/>
</dbReference>
<dbReference type="GO" id="GO:0008837">
    <property type="term" value="F:diaminopimelate epimerase activity"/>
    <property type="evidence" value="ECO:0007669"/>
    <property type="project" value="UniProtKB-UniRule"/>
</dbReference>
<dbReference type="GO" id="GO:0009089">
    <property type="term" value="P:lysine biosynthetic process via diaminopimelate"/>
    <property type="evidence" value="ECO:0007669"/>
    <property type="project" value="UniProtKB-UniRule"/>
</dbReference>
<dbReference type="FunFam" id="3.10.310.10:FF:000004">
    <property type="entry name" value="Diaminopimelate epimerase"/>
    <property type="match status" value="1"/>
</dbReference>
<dbReference type="FunFam" id="3.10.310.10:FF:000017">
    <property type="entry name" value="Diaminopimelate epimerase"/>
    <property type="match status" value="1"/>
</dbReference>
<dbReference type="Gene3D" id="3.10.310.10">
    <property type="entry name" value="Diaminopimelate Epimerase, Chain A, domain 1"/>
    <property type="match status" value="2"/>
</dbReference>
<dbReference type="HAMAP" id="MF_00197">
    <property type="entry name" value="DAP_epimerase"/>
    <property type="match status" value="1"/>
</dbReference>
<dbReference type="InterPro" id="IPR018510">
    <property type="entry name" value="DAP_epimerase_AS"/>
</dbReference>
<dbReference type="InterPro" id="IPR001653">
    <property type="entry name" value="DAP_epimerase_DapF"/>
</dbReference>
<dbReference type="NCBIfam" id="TIGR00652">
    <property type="entry name" value="DapF"/>
    <property type="match status" value="1"/>
</dbReference>
<dbReference type="PANTHER" id="PTHR31689:SF0">
    <property type="entry name" value="DIAMINOPIMELATE EPIMERASE"/>
    <property type="match status" value="1"/>
</dbReference>
<dbReference type="PANTHER" id="PTHR31689">
    <property type="entry name" value="DIAMINOPIMELATE EPIMERASE, CHLOROPLASTIC"/>
    <property type="match status" value="1"/>
</dbReference>
<dbReference type="Pfam" id="PF01678">
    <property type="entry name" value="DAP_epimerase"/>
    <property type="match status" value="2"/>
</dbReference>
<dbReference type="SUPFAM" id="SSF54506">
    <property type="entry name" value="Diaminopimelate epimerase-like"/>
    <property type="match status" value="1"/>
</dbReference>
<dbReference type="PROSITE" id="PS01326">
    <property type="entry name" value="DAP_EPIMERASE"/>
    <property type="match status" value="1"/>
</dbReference>
<organism>
    <name type="scientific">Leptospira interrogans serogroup Icterohaemorrhagiae serovar copenhageni (strain Fiocruz L1-130)</name>
    <dbReference type="NCBI Taxonomy" id="267671"/>
    <lineage>
        <taxon>Bacteria</taxon>
        <taxon>Pseudomonadati</taxon>
        <taxon>Spirochaetota</taxon>
        <taxon>Spirochaetia</taxon>
        <taxon>Leptospirales</taxon>
        <taxon>Leptospiraceae</taxon>
        <taxon>Leptospira</taxon>
    </lineage>
</organism>
<reference key="1">
    <citation type="journal article" date="2004" name="J. Bacteriol.">
        <title>Comparative genomics of two Leptospira interrogans serovars reveals novel insights into physiology and pathogenesis.</title>
        <authorList>
            <person name="Nascimento A.L.T.O."/>
            <person name="Ko A.I."/>
            <person name="Martins E.A.L."/>
            <person name="Monteiro-Vitorello C.B."/>
            <person name="Ho P.L."/>
            <person name="Haake D.A."/>
            <person name="Verjovski-Almeida S."/>
            <person name="Hartskeerl R.A."/>
            <person name="Marques M.V."/>
            <person name="Oliveira M.C."/>
            <person name="Menck C.F.M."/>
            <person name="Leite L.C.C."/>
            <person name="Carrer H."/>
            <person name="Coutinho L.L."/>
            <person name="Degrave W.M."/>
            <person name="Dellagostin O.A."/>
            <person name="El-Dorry H."/>
            <person name="Ferro E.S."/>
            <person name="Ferro M.I.T."/>
            <person name="Furlan L.R."/>
            <person name="Gamberini M."/>
            <person name="Giglioti E.A."/>
            <person name="Goes-Neto A."/>
            <person name="Goldman G.H."/>
            <person name="Goldman M.H.S."/>
            <person name="Harakava R."/>
            <person name="Jeronimo S.M.B."/>
            <person name="Junqueira-de-Azevedo I.L.M."/>
            <person name="Kimura E.T."/>
            <person name="Kuramae E.E."/>
            <person name="Lemos E.G.M."/>
            <person name="Lemos M.V.F."/>
            <person name="Marino C.L."/>
            <person name="Nunes L.R."/>
            <person name="de Oliveira R.C."/>
            <person name="Pereira G.G."/>
            <person name="Reis M.S."/>
            <person name="Schriefer A."/>
            <person name="Siqueira W.J."/>
            <person name="Sommer P."/>
            <person name="Tsai S.M."/>
            <person name="Simpson A.J.G."/>
            <person name="Ferro J.A."/>
            <person name="Camargo L.E.A."/>
            <person name="Kitajima J.P."/>
            <person name="Setubal J.C."/>
            <person name="Van Sluys M.A."/>
        </authorList>
    </citation>
    <scope>NUCLEOTIDE SEQUENCE [LARGE SCALE GENOMIC DNA]</scope>
    <source>
        <strain>Fiocruz L1-130</strain>
    </source>
</reference>
<evidence type="ECO:0000255" key="1">
    <source>
        <dbReference type="HAMAP-Rule" id="MF_00197"/>
    </source>
</evidence>
<sequence length="281" mass="30867">MASLKFTKMEGIGNDYVYIDSTRNDIRLTPEQIQKISDRNFGIGSDGVIFIRNSKQGDFMMDMYNSDGSSSEMCGNGIRCVAKYIYDHGLTSSKNPKIETGAGILEVDLKIGSGNKVDLVSVDMGKPVLVPSQIPVVWKNEETIIDQPLEIGDKNLKFTAVSMGNPHCVIFVDDSDEFPVRGIGPLIERHSIFPKRVNVEFVTIRGKDHLYQRTWERGAGETLACGTGACAVMVAGNLTGRSGKDVQIDLRGGTLRIQWQESGNILMTGPAREIFSGEIEI</sequence>
<comment type="function">
    <text evidence="1">Catalyzes the stereoinversion of LL-2,6-diaminopimelate (L,L-DAP) to meso-diaminopimelate (meso-DAP), a precursor of L-lysine and an essential component of the bacterial peptidoglycan.</text>
</comment>
<comment type="catalytic activity">
    <reaction evidence="1">
        <text>(2S,6S)-2,6-diaminopimelate = meso-2,6-diaminopimelate</text>
        <dbReference type="Rhea" id="RHEA:15393"/>
        <dbReference type="ChEBI" id="CHEBI:57609"/>
        <dbReference type="ChEBI" id="CHEBI:57791"/>
        <dbReference type="EC" id="5.1.1.7"/>
    </reaction>
</comment>
<comment type="pathway">
    <text evidence="1">Amino-acid biosynthesis; L-lysine biosynthesis via DAP pathway; DL-2,6-diaminopimelate from LL-2,6-diaminopimelate: step 1/1.</text>
</comment>
<comment type="subunit">
    <text evidence="1">Homodimer.</text>
</comment>
<comment type="subcellular location">
    <subcellularLocation>
        <location evidence="1">Cytoplasm</location>
    </subcellularLocation>
</comment>
<comment type="similarity">
    <text evidence="1">Belongs to the diaminopimelate epimerase family.</text>
</comment>
<feature type="chain" id="PRO_0000149847" description="Diaminopimelate epimerase">
    <location>
        <begin position="1"/>
        <end position="281"/>
    </location>
</feature>
<feature type="active site" description="Proton donor" evidence="1">
    <location>
        <position position="74"/>
    </location>
</feature>
<feature type="active site" description="Proton acceptor" evidence="1">
    <location>
        <position position="225"/>
    </location>
</feature>
<feature type="binding site" evidence="1">
    <location>
        <position position="14"/>
    </location>
    <ligand>
        <name>substrate</name>
    </ligand>
</feature>
<feature type="binding site" evidence="1">
    <location>
        <position position="65"/>
    </location>
    <ligand>
        <name>substrate</name>
    </ligand>
</feature>
<feature type="binding site" evidence="1">
    <location>
        <begin position="75"/>
        <end position="76"/>
    </location>
    <ligand>
        <name>substrate</name>
    </ligand>
</feature>
<feature type="binding site" evidence="1">
    <location>
        <position position="165"/>
    </location>
    <ligand>
        <name>substrate</name>
    </ligand>
</feature>
<feature type="binding site" evidence="1">
    <location>
        <position position="198"/>
    </location>
    <ligand>
        <name>substrate</name>
    </ligand>
</feature>
<feature type="binding site" evidence="1">
    <location>
        <begin position="216"/>
        <end position="217"/>
    </location>
    <ligand>
        <name>substrate</name>
    </ligand>
</feature>
<feature type="binding site" evidence="1">
    <location>
        <begin position="226"/>
        <end position="227"/>
    </location>
    <ligand>
        <name>substrate</name>
    </ligand>
</feature>
<feature type="site" description="Could be important to modulate the pK values of the two catalytic cysteine residues" evidence="1">
    <location>
        <position position="167"/>
    </location>
</feature>
<feature type="site" description="Could be important to modulate the pK values of the two catalytic cysteine residues" evidence="1">
    <location>
        <position position="216"/>
    </location>
</feature>
<name>DAPF_LEPIC</name>
<gene>
    <name evidence="1" type="primary">dapF</name>
    <name type="ordered locus">LIC_10074</name>
</gene>
<accession>Q72W63</accession>
<keyword id="KW-0028">Amino-acid biosynthesis</keyword>
<keyword id="KW-0963">Cytoplasm</keyword>
<keyword id="KW-0413">Isomerase</keyword>
<keyword id="KW-0457">Lysine biosynthesis</keyword>
<protein>
    <recommendedName>
        <fullName evidence="1">Diaminopimelate epimerase</fullName>
        <shortName evidence="1">DAP epimerase</shortName>
        <ecNumber evidence="1">5.1.1.7</ecNumber>
    </recommendedName>
    <alternativeName>
        <fullName evidence="1">PLP-independent amino acid racemase</fullName>
    </alternativeName>
</protein>